<name>FAR3_HEMMO</name>
<sequence>GPSAFLRL</sequence>
<evidence type="ECO:0000250" key="1">
    <source>
        <dbReference type="UniProtKB" id="P34405"/>
    </source>
</evidence>
<evidence type="ECO:0000255" key="2"/>
<evidence type="ECO:0000269" key="3">
    <source>
    </source>
</evidence>
<evidence type="ECO:0000303" key="4">
    <source>
    </source>
</evidence>
<evidence type="ECO:0000305" key="5"/>
<evidence type="ECO:0000305" key="6">
    <source>
    </source>
</evidence>
<reference evidence="5" key="1">
    <citation type="journal article" date="2012" name="Syst. Biol.">
        <title>Peptidomics-based phylogeny and biogeography of Mantophasmatodea (Hexapoda).</title>
        <authorList>
            <person name="Predel R."/>
            <person name="Neupert S."/>
            <person name="Huetteroth W."/>
            <person name="Kahnt J."/>
            <person name="Waidelich D."/>
            <person name="Roth S."/>
        </authorList>
    </citation>
    <scope>PROTEIN SEQUENCE</scope>
    <scope>AMIDATION AT LEU-8</scope>
    <source>
        <tissue evidence="3">Thoracic perisympathetic organs</tissue>
    </source>
</reference>
<feature type="peptide" id="PRO_0000421495" description="Extended FMRFamide-3" evidence="3">
    <location>
        <begin position="1"/>
        <end position="8"/>
    </location>
</feature>
<feature type="modified residue" description="Leucine amide" evidence="3">
    <location>
        <position position="8"/>
    </location>
</feature>
<feature type="unsure residue" description="L or I" evidence="3">
    <location>
        <position position="6"/>
    </location>
</feature>
<feature type="unsure residue" description="L or I" evidence="3">
    <location>
        <position position="8"/>
    </location>
</feature>
<proteinExistence type="evidence at protein level"/>
<comment type="function">
    <text evidence="1">FMRFamides and FMRFamide-like peptides are neuropeptides.</text>
</comment>
<comment type="subcellular location">
    <subcellularLocation>
        <location evidence="6">Secreted</location>
    </subcellularLocation>
</comment>
<comment type="similarity">
    <text evidence="2">Belongs to the FARP (FMRF amide related peptide) family.</text>
</comment>
<keyword id="KW-0027">Amidation</keyword>
<keyword id="KW-0903">Direct protein sequencing</keyword>
<keyword id="KW-0527">Neuropeptide</keyword>
<keyword id="KW-0964">Secreted</keyword>
<organism>
    <name type="scientific">Hemilobophasma montaguense</name>
    <name type="common">Gladiator</name>
    <name type="synonym">Heel-walker</name>
    <dbReference type="NCBI Taxonomy" id="253130"/>
    <lineage>
        <taxon>Eukaryota</taxon>
        <taxon>Metazoa</taxon>
        <taxon>Ecdysozoa</taxon>
        <taxon>Arthropoda</taxon>
        <taxon>Hexapoda</taxon>
        <taxon>Insecta</taxon>
        <taxon>Pterygota</taxon>
        <taxon>Neoptera</taxon>
        <taxon>Polyneoptera</taxon>
        <taxon>Mantophasmatodea</taxon>
        <taxon>Austrophasmatidae</taxon>
        <taxon>Hemilobophasma</taxon>
    </lineage>
</organism>
<accession>B3A0C2</accession>
<dbReference type="GO" id="GO:0005576">
    <property type="term" value="C:extracellular region"/>
    <property type="evidence" value="ECO:0007669"/>
    <property type="project" value="UniProtKB-SubCell"/>
</dbReference>
<dbReference type="GO" id="GO:0007218">
    <property type="term" value="P:neuropeptide signaling pathway"/>
    <property type="evidence" value="ECO:0007669"/>
    <property type="project" value="UniProtKB-KW"/>
</dbReference>
<protein>
    <recommendedName>
        <fullName evidence="4">Extended FMRFamide-3</fullName>
        <shortName evidence="4">FMRFa-3</shortName>
    </recommendedName>
</protein>